<evidence type="ECO:0000250" key="1"/>
<evidence type="ECO:0000250" key="2">
    <source>
        <dbReference type="UniProtKB" id="P00157"/>
    </source>
</evidence>
<evidence type="ECO:0000255" key="3">
    <source>
        <dbReference type="PROSITE-ProRule" id="PRU00967"/>
    </source>
</evidence>
<evidence type="ECO:0000255" key="4">
    <source>
        <dbReference type="PROSITE-ProRule" id="PRU00968"/>
    </source>
</evidence>
<protein>
    <recommendedName>
        <fullName>Cytochrome b</fullName>
    </recommendedName>
    <alternativeName>
        <fullName>Complex III subunit 3</fullName>
    </alternativeName>
    <alternativeName>
        <fullName>Complex III subunit III</fullName>
    </alternativeName>
    <alternativeName>
        <fullName>Cytochrome b-c1 complex subunit 3</fullName>
    </alternativeName>
    <alternativeName>
        <fullName>Ubiquinol-cytochrome-c reductase complex cytochrome b subunit</fullName>
    </alternativeName>
</protein>
<sequence length="379" mass="42777">MTNIRKSHPLMKIVNNAFIDLPAPSNISSWWNFGSLLGICLILQILTGLFLAMHYTSDTMTAFASVTHICRDVNYGWIIRYMHANGASMFFICLYMHVGRGLYYGSYTFLETWNIGVILLFTVMATAFMGYVLPWGQMSFWGATVITNLLSAIPYIGTNLVEWIWGGFSVDKATLTRFFAFHFILPFIIAALAMIHLLFLHETGSNNPTGISSDADKIPFHPYYTIKDILGALLLILALMMLVLFAPDLLGDPDNYTPANPLSTPPHIKPEWYFLFAYAILRSIPNKLGGVMALVLSILILILMPLLHTSKQRSMMFRPLSQCMFWILVANLLTLTWIGGQPVEHPYIIIGQLASIMYFLLILVLMPTASMIENNLLKW</sequence>
<name>CYB_BOSTR</name>
<feature type="chain" id="PRO_0000060681" description="Cytochrome b">
    <location>
        <begin position="1"/>
        <end position="379"/>
    </location>
</feature>
<feature type="transmembrane region" description="Helical" evidence="2">
    <location>
        <begin position="33"/>
        <end position="53"/>
    </location>
</feature>
<feature type="transmembrane region" description="Helical" evidence="2">
    <location>
        <begin position="77"/>
        <end position="98"/>
    </location>
</feature>
<feature type="transmembrane region" description="Helical" evidence="2">
    <location>
        <begin position="113"/>
        <end position="133"/>
    </location>
</feature>
<feature type="transmembrane region" description="Helical" evidence="2">
    <location>
        <begin position="178"/>
        <end position="198"/>
    </location>
</feature>
<feature type="transmembrane region" description="Helical" evidence="2">
    <location>
        <begin position="226"/>
        <end position="246"/>
    </location>
</feature>
<feature type="transmembrane region" description="Helical" evidence="2">
    <location>
        <begin position="288"/>
        <end position="308"/>
    </location>
</feature>
<feature type="transmembrane region" description="Helical" evidence="2">
    <location>
        <begin position="320"/>
        <end position="340"/>
    </location>
</feature>
<feature type="transmembrane region" description="Helical" evidence="2">
    <location>
        <begin position="347"/>
        <end position="367"/>
    </location>
</feature>
<feature type="binding site" description="axial binding residue" evidence="2">
    <location>
        <position position="83"/>
    </location>
    <ligand>
        <name>heme b</name>
        <dbReference type="ChEBI" id="CHEBI:60344"/>
        <label>b562</label>
    </ligand>
    <ligandPart>
        <name>Fe</name>
        <dbReference type="ChEBI" id="CHEBI:18248"/>
    </ligandPart>
</feature>
<feature type="binding site" description="axial binding residue" evidence="2">
    <location>
        <position position="97"/>
    </location>
    <ligand>
        <name>heme b</name>
        <dbReference type="ChEBI" id="CHEBI:60344"/>
        <label>b566</label>
    </ligand>
    <ligandPart>
        <name>Fe</name>
        <dbReference type="ChEBI" id="CHEBI:18248"/>
    </ligandPart>
</feature>
<feature type="binding site" description="axial binding residue" evidence="2">
    <location>
        <position position="182"/>
    </location>
    <ligand>
        <name>heme b</name>
        <dbReference type="ChEBI" id="CHEBI:60344"/>
        <label>b562</label>
    </ligand>
    <ligandPart>
        <name>Fe</name>
        <dbReference type="ChEBI" id="CHEBI:18248"/>
    </ligandPart>
</feature>
<feature type="binding site" description="axial binding residue" evidence="2">
    <location>
        <position position="196"/>
    </location>
    <ligand>
        <name>heme b</name>
        <dbReference type="ChEBI" id="CHEBI:60344"/>
        <label>b566</label>
    </ligand>
    <ligandPart>
        <name>Fe</name>
        <dbReference type="ChEBI" id="CHEBI:18248"/>
    </ligandPart>
</feature>
<feature type="binding site" evidence="2">
    <location>
        <position position="201"/>
    </location>
    <ligand>
        <name>a ubiquinone</name>
        <dbReference type="ChEBI" id="CHEBI:16389"/>
    </ligand>
</feature>
<dbReference type="EMBL" id="AJ222679">
    <property type="protein sequence ID" value="CAA10934.1"/>
    <property type="molecule type" value="Genomic_DNA"/>
</dbReference>
<dbReference type="RefSeq" id="YP_007624950.1">
    <property type="nucleotide sequence ID" value="NC_020614.1"/>
</dbReference>
<dbReference type="SMR" id="O79311"/>
<dbReference type="GeneID" id="14841487"/>
<dbReference type="CTD" id="4519"/>
<dbReference type="GO" id="GO:0005743">
    <property type="term" value="C:mitochondrial inner membrane"/>
    <property type="evidence" value="ECO:0007669"/>
    <property type="project" value="UniProtKB-SubCell"/>
</dbReference>
<dbReference type="GO" id="GO:0045275">
    <property type="term" value="C:respiratory chain complex III"/>
    <property type="evidence" value="ECO:0007669"/>
    <property type="project" value="InterPro"/>
</dbReference>
<dbReference type="GO" id="GO:0046872">
    <property type="term" value="F:metal ion binding"/>
    <property type="evidence" value="ECO:0007669"/>
    <property type="project" value="UniProtKB-KW"/>
</dbReference>
<dbReference type="GO" id="GO:0008121">
    <property type="term" value="F:ubiquinol-cytochrome-c reductase activity"/>
    <property type="evidence" value="ECO:0007669"/>
    <property type="project" value="InterPro"/>
</dbReference>
<dbReference type="GO" id="GO:0006122">
    <property type="term" value="P:mitochondrial electron transport, ubiquinol to cytochrome c"/>
    <property type="evidence" value="ECO:0007669"/>
    <property type="project" value="TreeGrafter"/>
</dbReference>
<dbReference type="CDD" id="cd00290">
    <property type="entry name" value="cytochrome_b_C"/>
    <property type="match status" value="1"/>
</dbReference>
<dbReference type="CDD" id="cd00284">
    <property type="entry name" value="Cytochrome_b_N"/>
    <property type="match status" value="1"/>
</dbReference>
<dbReference type="FunFam" id="1.20.810.10:FF:000002">
    <property type="entry name" value="Cytochrome b"/>
    <property type="match status" value="1"/>
</dbReference>
<dbReference type="Gene3D" id="1.20.810.10">
    <property type="entry name" value="Cytochrome Bc1 Complex, Chain C"/>
    <property type="match status" value="1"/>
</dbReference>
<dbReference type="InterPro" id="IPR005798">
    <property type="entry name" value="Cyt_b/b6_C"/>
</dbReference>
<dbReference type="InterPro" id="IPR036150">
    <property type="entry name" value="Cyt_b/b6_C_sf"/>
</dbReference>
<dbReference type="InterPro" id="IPR005797">
    <property type="entry name" value="Cyt_b/b6_N"/>
</dbReference>
<dbReference type="InterPro" id="IPR027387">
    <property type="entry name" value="Cytb/b6-like_sf"/>
</dbReference>
<dbReference type="InterPro" id="IPR030689">
    <property type="entry name" value="Cytochrome_b"/>
</dbReference>
<dbReference type="InterPro" id="IPR048260">
    <property type="entry name" value="Cytochrome_b_C_euk/bac"/>
</dbReference>
<dbReference type="InterPro" id="IPR048259">
    <property type="entry name" value="Cytochrome_b_N_euk/bac"/>
</dbReference>
<dbReference type="InterPro" id="IPR016174">
    <property type="entry name" value="Di-haem_cyt_TM"/>
</dbReference>
<dbReference type="PANTHER" id="PTHR19271">
    <property type="entry name" value="CYTOCHROME B"/>
    <property type="match status" value="1"/>
</dbReference>
<dbReference type="PANTHER" id="PTHR19271:SF16">
    <property type="entry name" value="CYTOCHROME B"/>
    <property type="match status" value="1"/>
</dbReference>
<dbReference type="Pfam" id="PF00032">
    <property type="entry name" value="Cytochrom_B_C"/>
    <property type="match status" value="1"/>
</dbReference>
<dbReference type="Pfam" id="PF00033">
    <property type="entry name" value="Cytochrome_B"/>
    <property type="match status" value="1"/>
</dbReference>
<dbReference type="PIRSF" id="PIRSF038885">
    <property type="entry name" value="COB"/>
    <property type="match status" value="1"/>
</dbReference>
<dbReference type="SUPFAM" id="SSF81648">
    <property type="entry name" value="a domain/subunit of cytochrome bc1 complex (Ubiquinol-cytochrome c reductase)"/>
    <property type="match status" value="1"/>
</dbReference>
<dbReference type="SUPFAM" id="SSF81342">
    <property type="entry name" value="Transmembrane di-heme cytochromes"/>
    <property type="match status" value="1"/>
</dbReference>
<dbReference type="PROSITE" id="PS51003">
    <property type="entry name" value="CYTB_CTER"/>
    <property type="match status" value="1"/>
</dbReference>
<dbReference type="PROSITE" id="PS51002">
    <property type="entry name" value="CYTB_NTER"/>
    <property type="match status" value="1"/>
</dbReference>
<comment type="function">
    <text evidence="2">Component of the ubiquinol-cytochrome c reductase complex (complex III or cytochrome b-c1 complex) that is part of the mitochondrial respiratory chain. The b-c1 complex mediates electron transfer from ubiquinol to cytochrome c. Contributes to the generation of a proton gradient across the mitochondrial membrane that is then used for ATP synthesis.</text>
</comment>
<comment type="cofactor">
    <cofactor evidence="2">
        <name>heme b</name>
        <dbReference type="ChEBI" id="CHEBI:60344"/>
    </cofactor>
    <text evidence="2">Binds 2 heme b groups non-covalently.</text>
</comment>
<comment type="subunit">
    <text evidence="2">The cytochrome bc1 complex contains 11 subunits: 3 respiratory subunits (MT-CYB, CYC1 and UQCRFS1), 2 core proteins (UQCRC1 and UQCRC2) and 6 low-molecular weight proteins (UQCRH/QCR6, UQCRB/QCR7, UQCRQ/QCR8, UQCR10/QCR9, UQCR11/QCR10 and a cleavage product of UQCRFS1). This cytochrome bc1 complex then forms a dimer.</text>
</comment>
<comment type="subcellular location">
    <subcellularLocation>
        <location evidence="2">Mitochondrion inner membrane</location>
        <topology evidence="2">Multi-pass membrane protein</topology>
    </subcellularLocation>
</comment>
<comment type="miscellaneous">
    <text evidence="1">Heme 1 (or BL or b562) is low-potential and absorbs at about 562 nm, and heme 2 (or BH or b566) is high-potential and absorbs at about 566 nm.</text>
</comment>
<comment type="similarity">
    <text evidence="3 4">Belongs to the cytochrome b family.</text>
</comment>
<comment type="caution">
    <text evidence="2">The full-length protein contains only eight transmembrane helices, not nine as predicted by bioinformatics tools.</text>
</comment>
<reference key="1">
    <citation type="journal article" date="1999" name="Mol. Phylogenet. Evol.">
        <title>The tribal radiation of the family Bovidae (Artiodactyla) and the evolution of the mitochondrial cytochrome b gene.</title>
        <authorList>
            <person name="Hassanin A."/>
            <person name="Douzery E.J.P."/>
        </authorList>
    </citation>
    <scope>NUCLEOTIDE SEQUENCE [GENOMIC DNA]</scope>
    <source>
        <strain>Isolate #4946F</strain>
    </source>
</reference>
<geneLocation type="mitochondrion"/>
<organism>
    <name type="scientific">Boselaphus tragocamelus</name>
    <name type="common">Nilgai</name>
    <dbReference type="NCBI Taxonomy" id="9917"/>
    <lineage>
        <taxon>Eukaryota</taxon>
        <taxon>Metazoa</taxon>
        <taxon>Chordata</taxon>
        <taxon>Craniata</taxon>
        <taxon>Vertebrata</taxon>
        <taxon>Euteleostomi</taxon>
        <taxon>Mammalia</taxon>
        <taxon>Eutheria</taxon>
        <taxon>Laurasiatheria</taxon>
        <taxon>Artiodactyla</taxon>
        <taxon>Ruminantia</taxon>
        <taxon>Pecora</taxon>
        <taxon>Bovidae</taxon>
        <taxon>Bovinae</taxon>
        <taxon>Boselaphus</taxon>
    </lineage>
</organism>
<gene>
    <name type="primary">MT-CYB</name>
    <name type="synonym">COB</name>
    <name type="synonym">CYTB</name>
    <name type="synonym">MTCYB</name>
</gene>
<proteinExistence type="inferred from homology"/>
<keyword id="KW-0249">Electron transport</keyword>
<keyword id="KW-0349">Heme</keyword>
<keyword id="KW-0408">Iron</keyword>
<keyword id="KW-0472">Membrane</keyword>
<keyword id="KW-0479">Metal-binding</keyword>
<keyword id="KW-0496">Mitochondrion</keyword>
<keyword id="KW-0999">Mitochondrion inner membrane</keyword>
<keyword id="KW-0679">Respiratory chain</keyword>
<keyword id="KW-0812">Transmembrane</keyword>
<keyword id="KW-1133">Transmembrane helix</keyword>
<keyword id="KW-0813">Transport</keyword>
<keyword id="KW-0830">Ubiquinone</keyword>
<accession>O79311</accession>